<feature type="chain" id="PRO_1000045973" description="1-pyrroline-5-carboxylate dehydrogenase">
    <location>
        <begin position="1"/>
        <end position="514"/>
    </location>
</feature>
<feature type="active site" evidence="1">
    <location>
        <position position="286"/>
    </location>
</feature>
<feature type="active site" evidence="1">
    <location>
        <position position="320"/>
    </location>
</feature>
<name>ROCA_STAA3</name>
<keyword id="KW-0520">NAD</keyword>
<keyword id="KW-0560">Oxidoreductase</keyword>
<sequence>MVVEFKNEPGYDFSVQENVDMFKKALKDVEKELGQDIPLVINGEKIFKDDKIKSINPADTSQVIANASKATKQDVEDAFKAANEAYKSWKTWSANDRAELMLRVSAIIRRRKAEIAAIMVYEAGKPWDEAVGDAAEGIDFIEYYARSMMDLAQGKPVLDREGEHNKYFYKSIGTGVTIPPWNFPFAIMAGTTLAPVVAGNTVLLKPAEDTPYIAYKLMEILEEAGLPKGVVNFVPGDPKEIGDYLVDHKDTHFVTFTGSRATGTRIYERSAVVQEGQNFLKRVIAEMGGKDAIVVDENIDTDMAAEAIVTSAFGFSGQKCSACSRAIVHKDVYDEVLEKSIKLTKELTLGNTVDNTYMGPVINKKQFDKIKNYIEIGKEEGKLEQGGGTDDSKGYFVEPTIISGLKSKDRIMQEEIFGPVVGFVKVNDFDEAIEVANDTDYGLTGAVITNNREHWIKAVNEFDVGNLYLNRGCTSAVVGYHPFGGFKMSGTDAKTGSPDYLLHFLEQKVVSEMF</sequence>
<dbReference type="EC" id="1.2.1.88" evidence="1"/>
<dbReference type="EMBL" id="CP000255">
    <property type="protein sequence ID" value="ABD22274.1"/>
    <property type="molecule type" value="Genomic_DNA"/>
</dbReference>
<dbReference type="SMR" id="Q2FDV3"/>
<dbReference type="KEGG" id="saa:SAUSA300_2491"/>
<dbReference type="HOGENOM" id="CLU_005391_0_0_9"/>
<dbReference type="OMA" id="VGAAKEW"/>
<dbReference type="UniPathway" id="UPA00261">
    <property type="reaction ID" value="UER00374"/>
</dbReference>
<dbReference type="Proteomes" id="UP000001939">
    <property type="component" value="Chromosome"/>
</dbReference>
<dbReference type="GO" id="GO:0009898">
    <property type="term" value="C:cytoplasmic side of plasma membrane"/>
    <property type="evidence" value="ECO:0007669"/>
    <property type="project" value="TreeGrafter"/>
</dbReference>
<dbReference type="GO" id="GO:0003842">
    <property type="term" value="F:1-pyrroline-5-carboxylate dehydrogenase activity"/>
    <property type="evidence" value="ECO:0007669"/>
    <property type="project" value="UniProtKB-UniRule"/>
</dbReference>
<dbReference type="GO" id="GO:0006537">
    <property type="term" value="P:glutamate biosynthetic process"/>
    <property type="evidence" value="ECO:0007669"/>
    <property type="project" value="UniProtKB-UniRule"/>
</dbReference>
<dbReference type="GO" id="GO:0010133">
    <property type="term" value="P:proline catabolic process to glutamate"/>
    <property type="evidence" value="ECO:0007669"/>
    <property type="project" value="UniProtKB-UniPathway"/>
</dbReference>
<dbReference type="CDD" id="cd07124">
    <property type="entry name" value="ALDH_PutA-P5CDH-RocA"/>
    <property type="match status" value="1"/>
</dbReference>
<dbReference type="FunFam" id="3.40.309.10:FF:000005">
    <property type="entry name" value="1-pyrroline-5-carboxylate dehydrogenase 1"/>
    <property type="match status" value="1"/>
</dbReference>
<dbReference type="FunFam" id="3.40.605.10:FF:000045">
    <property type="entry name" value="1-pyrroline-5-carboxylate dehydrogenase 1"/>
    <property type="match status" value="1"/>
</dbReference>
<dbReference type="Gene3D" id="3.40.605.10">
    <property type="entry name" value="Aldehyde Dehydrogenase, Chain A, domain 1"/>
    <property type="match status" value="1"/>
</dbReference>
<dbReference type="Gene3D" id="3.40.309.10">
    <property type="entry name" value="Aldehyde Dehydrogenase, Chain A, domain 2"/>
    <property type="match status" value="1"/>
</dbReference>
<dbReference type="HAMAP" id="MF_00733">
    <property type="entry name" value="RocA"/>
    <property type="match status" value="1"/>
</dbReference>
<dbReference type="InterPro" id="IPR016161">
    <property type="entry name" value="Ald_DH/histidinol_DH"/>
</dbReference>
<dbReference type="InterPro" id="IPR016163">
    <property type="entry name" value="Ald_DH_C"/>
</dbReference>
<dbReference type="InterPro" id="IPR016160">
    <property type="entry name" value="Ald_DH_CS_CYS"/>
</dbReference>
<dbReference type="InterPro" id="IPR029510">
    <property type="entry name" value="Ald_DH_CS_GLU"/>
</dbReference>
<dbReference type="InterPro" id="IPR016162">
    <property type="entry name" value="Ald_DH_N"/>
</dbReference>
<dbReference type="InterPro" id="IPR015590">
    <property type="entry name" value="Aldehyde_DH_dom"/>
</dbReference>
<dbReference type="InterPro" id="IPR050485">
    <property type="entry name" value="Proline_metab_enzyme"/>
</dbReference>
<dbReference type="InterPro" id="IPR005932">
    <property type="entry name" value="RocA"/>
</dbReference>
<dbReference type="InterPro" id="IPR047597">
    <property type="entry name" value="RocA_bacillales"/>
</dbReference>
<dbReference type="NCBIfam" id="TIGR01237">
    <property type="entry name" value="D1pyr5carbox2"/>
    <property type="match status" value="1"/>
</dbReference>
<dbReference type="NCBIfam" id="NF002852">
    <property type="entry name" value="PRK03137.1"/>
    <property type="match status" value="1"/>
</dbReference>
<dbReference type="PANTHER" id="PTHR42862">
    <property type="entry name" value="DELTA-1-PYRROLINE-5-CARBOXYLATE DEHYDROGENASE 1, ISOFORM A-RELATED"/>
    <property type="match status" value="1"/>
</dbReference>
<dbReference type="PANTHER" id="PTHR42862:SF1">
    <property type="entry name" value="DELTA-1-PYRROLINE-5-CARBOXYLATE DEHYDROGENASE 2, ISOFORM A-RELATED"/>
    <property type="match status" value="1"/>
</dbReference>
<dbReference type="Pfam" id="PF00171">
    <property type="entry name" value="Aldedh"/>
    <property type="match status" value="1"/>
</dbReference>
<dbReference type="SUPFAM" id="SSF53720">
    <property type="entry name" value="ALDH-like"/>
    <property type="match status" value="1"/>
</dbReference>
<dbReference type="PROSITE" id="PS00070">
    <property type="entry name" value="ALDEHYDE_DEHYDR_CYS"/>
    <property type="match status" value="1"/>
</dbReference>
<dbReference type="PROSITE" id="PS00687">
    <property type="entry name" value="ALDEHYDE_DEHYDR_GLU"/>
    <property type="match status" value="1"/>
</dbReference>
<accession>Q2FDV3</accession>
<comment type="catalytic activity">
    <reaction evidence="1">
        <text>L-glutamate 5-semialdehyde + NAD(+) + H2O = L-glutamate + NADH + 2 H(+)</text>
        <dbReference type="Rhea" id="RHEA:30235"/>
        <dbReference type="ChEBI" id="CHEBI:15377"/>
        <dbReference type="ChEBI" id="CHEBI:15378"/>
        <dbReference type="ChEBI" id="CHEBI:29985"/>
        <dbReference type="ChEBI" id="CHEBI:57540"/>
        <dbReference type="ChEBI" id="CHEBI:57945"/>
        <dbReference type="ChEBI" id="CHEBI:58066"/>
        <dbReference type="EC" id="1.2.1.88"/>
    </reaction>
</comment>
<comment type="pathway">
    <text evidence="1">Amino-acid degradation; L-proline degradation into L-glutamate; L-glutamate from L-proline: step 2/2.</text>
</comment>
<comment type="similarity">
    <text evidence="1">Belongs to the aldehyde dehydrogenase family. RocA subfamily.</text>
</comment>
<protein>
    <recommendedName>
        <fullName evidence="1">1-pyrroline-5-carboxylate dehydrogenase</fullName>
        <shortName evidence="1">P5C dehydrogenase</shortName>
        <ecNumber evidence="1">1.2.1.88</ecNumber>
    </recommendedName>
    <alternativeName>
        <fullName evidence="1">L-glutamate gamma-semialdehyde dehydrogenase</fullName>
    </alternativeName>
</protein>
<gene>
    <name evidence="1" type="primary">rocA</name>
    <name type="ordered locus">SAUSA300_2491</name>
</gene>
<evidence type="ECO:0000255" key="1">
    <source>
        <dbReference type="HAMAP-Rule" id="MF_00733"/>
    </source>
</evidence>
<reference key="1">
    <citation type="journal article" date="2006" name="Lancet">
        <title>Complete genome sequence of USA300, an epidemic clone of community-acquired meticillin-resistant Staphylococcus aureus.</title>
        <authorList>
            <person name="Diep B.A."/>
            <person name="Gill S.R."/>
            <person name="Chang R.F."/>
            <person name="Phan T.H."/>
            <person name="Chen J.H."/>
            <person name="Davidson M.G."/>
            <person name="Lin F."/>
            <person name="Lin J."/>
            <person name="Carleton H.A."/>
            <person name="Mongodin E.F."/>
            <person name="Sensabaugh G.F."/>
            <person name="Perdreau-Remington F."/>
        </authorList>
    </citation>
    <scope>NUCLEOTIDE SEQUENCE [LARGE SCALE GENOMIC DNA]</scope>
    <source>
        <strain>USA300</strain>
    </source>
</reference>
<organism>
    <name type="scientific">Staphylococcus aureus (strain USA300)</name>
    <dbReference type="NCBI Taxonomy" id="367830"/>
    <lineage>
        <taxon>Bacteria</taxon>
        <taxon>Bacillati</taxon>
        <taxon>Bacillota</taxon>
        <taxon>Bacilli</taxon>
        <taxon>Bacillales</taxon>
        <taxon>Staphylococcaceae</taxon>
        <taxon>Staphylococcus</taxon>
    </lineage>
</organism>
<proteinExistence type="inferred from homology"/>